<feature type="chain" id="PRO_0000109636" description="Glutamate 5-kinase">
    <location>
        <begin position="1"/>
        <end position="374"/>
    </location>
</feature>
<feature type="domain" description="PUA" evidence="1">
    <location>
        <begin position="276"/>
        <end position="354"/>
    </location>
</feature>
<feature type="binding site" evidence="1">
    <location>
        <position position="9"/>
    </location>
    <ligand>
        <name>ATP</name>
        <dbReference type="ChEBI" id="CHEBI:30616"/>
    </ligand>
</feature>
<feature type="binding site" evidence="1">
    <location>
        <position position="49"/>
    </location>
    <ligand>
        <name>substrate</name>
    </ligand>
</feature>
<feature type="binding site" evidence="1">
    <location>
        <position position="136"/>
    </location>
    <ligand>
        <name>substrate</name>
    </ligand>
</feature>
<feature type="binding site" evidence="1">
    <location>
        <position position="148"/>
    </location>
    <ligand>
        <name>substrate</name>
    </ligand>
</feature>
<feature type="binding site" evidence="1">
    <location>
        <begin position="168"/>
        <end position="169"/>
    </location>
    <ligand>
        <name>ATP</name>
        <dbReference type="ChEBI" id="CHEBI:30616"/>
    </ligand>
</feature>
<feature type="binding site" evidence="1">
    <location>
        <begin position="210"/>
        <end position="216"/>
    </location>
    <ligand>
        <name>ATP</name>
        <dbReference type="ChEBI" id="CHEBI:30616"/>
    </ligand>
</feature>
<sequence length="374" mass="40422">MKRQRIVIKIGSSSLTTKQGALDLEKLEGYVRAIVNLRKAGHEVILISSGAVAAGFSRLGYPVRPTTMAGKQAAAAVGQALLMQHYMERFHQHGIIAAQLLLTRKDFQNQTQYTNAYSALMELLKRGALPIINENDSTSIAELTFGDNDMLSALVSGLIHAHTLCILTDVNGLYDANPKTHPNAKRYQYLPTIPDEMLQMGGEAGSNVGTGGMKSKVAAAQTALSLGVDVFIGKASGEHALLDILSGKGDGTYVGNTGDLMEGKTKQWIRLHSPVSGVVRIDQGAERAIMNEGKSLLPAGVTSVHGTFQAGDVVHIWNEQNKVIAKGQVTLSSEQLRKVQGRKSDEAKQLIPLVRDEVVHRDQLVIQEKELNES</sequence>
<name>PROB_HALH5</name>
<accession>Q9KCR4</accession>
<comment type="function">
    <text evidence="1">Catalyzes the transfer of a phosphate group to glutamate to form L-glutamate 5-phosphate.</text>
</comment>
<comment type="catalytic activity">
    <reaction evidence="1">
        <text>L-glutamate + ATP = L-glutamyl 5-phosphate + ADP</text>
        <dbReference type="Rhea" id="RHEA:14877"/>
        <dbReference type="ChEBI" id="CHEBI:29985"/>
        <dbReference type="ChEBI" id="CHEBI:30616"/>
        <dbReference type="ChEBI" id="CHEBI:58274"/>
        <dbReference type="ChEBI" id="CHEBI:456216"/>
        <dbReference type="EC" id="2.7.2.11"/>
    </reaction>
</comment>
<comment type="pathway">
    <text evidence="1">Amino-acid biosynthesis; L-proline biosynthesis; L-glutamate 5-semialdehyde from L-glutamate: step 1/2.</text>
</comment>
<comment type="subcellular location">
    <subcellularLocation>
        <location evidence="1">Cytoplasm</location>
    </subcellularLocation>
</comment>
<comment type="similarity">
    <text evidence="1">Belongs to the glutamate 5-kinase family.</text>
</comment>
<protein>
    <recommendedName>
        <fullName evidence="1">Glutamate 5-kinase</fullName>
        <ecNumber evidence="1">2.7.2.11</ecNumber>
    </recommendedName>
    <alternativeName>
        <fullName evidence="1">Gamma-glutamyl kinase</fullName>
        <shortName evidence="1">GK</shortName>
    </alternativeName>
</protein>
<reference key="1">
    <citation type="journal article" date="2000" name="Nucleic Acids Res.">
        <title>Complete genome sequence of the alkaliphilic bacterium Bacillus halodurans and genomic sequence comparison with Bacillus subtilis.</title>
        <authorList>
            <person name="Takami H."/>
            <person name="Nakasone K."/>
            <person name="Takaki Y."/>
            <person name="Maeno G."/>
            <person name="Sasaki R."/>
            <person name="Masui N."/>
            <person name="Fuji F."/>
            <person name="Hirama C."/>
            <person name="Nakamura Y."/>
            <person name="Ogasawara N."/>
            <person name="Kuhara S."/>
            <person name="Horikoshi K."/>
        </authorList>
    </citation>
    <scope>NUCLEOTIDE SEQUENCE [LARGE SCALE GENOMIC DNA]</scope>
    <source>
        <strain>ATCC BAA-125 / DSM 18197 / FERM 7344 / JCM 9153 / C-125</strain>
    </source>
</reference>
<gene>
    <name evidence="1" type="primary">proB</name>
    <name type="ordered locus">BH1505</name>
</gene>
<organism>
    <name type="scientific">Halalkalibacterium halodurans (strain ATCC BAA-125 / DSM 18197 / FERM 7344 / JCM 9153 / C-125)</name>
    <name type="common">Bacillus halodurans</name>
    <dbReference type="NCBI Taxonomy" id="272558"/>
    <lineage>
        <taxon>Bacteria</taxon>
        <taxon>Bacillati</taxon>
        <taxon>Bacillota</taxon>
        <taxon>Bacilli</taxon>
        <taxon>Bacillales</taxon>
        <taxon>Bacillaceae</taxon>
        <taxon>Halalkalibacterium (ex Joshi et al. 2022)</taxon>
    </lineage>
</organism>
<evidence type="ECO:0000255" key="1">
    <source>
        <dbReference type="HAMAP-Rule" id="MF_00456"/>
    </source>
</evidence>
<keyword id="KW-0028">Amino-acid biosynthesis</keyword>
<keyword id="KW-0067">ATP-binding</keyword>
<keyword id="KW-0963">Cytoplasm</keyword>
<keyword id="KW-0418">Kinase</keyword>
<keyword id="KW-0547">Nucleotide-binding</keyword>
<keyword id="KW-0641">Proline biosynthesis</keyword>
<keyword id="KW-1185">Reference proteome</keyword>
<keyword id="KW-0808">Transferase</keyword>
<dbReference type="EC" id="2.7.2.11" evidence="1"/>
<dbReference type="EMBL" id="BA000004">
    <property type="protein sequence ID" value="BAB05224.1"/>
    <property type="molecule type" value="Genomic_DNA"/>
</dbReference>
<dbReference type="PIR" id="A83838">
    <property type="entry name" value="A83838"/>
</dbReference>
<dbReference type="RefSeq" id="WP_010897670.1">
    <property type="nucleotide sequence ID" value="NC_002570.2"/>
</dbReference>
<dbReference type="SMR" id="Q9KCR4"/>
<dbReference type="STRING" id="272558.gene:10727403"/>
<dbReference type="KEGG" id="bha:BH1505"/>
<dbReference type="eggNOG" id="COG0263">
    <property type="taxonomic scope" value="Bacteria"/>
</dbReference>
<dbReference type="HOGENOM" id="CLU_025400_2_0_9"/>
<dbReference type="OrthoDB" id="9804434at2"/>
<dbReference type="UniPathway" id="UPA00098">
    <property type="reaction ID" value="UER00359"/>
</dbReference>
<dbReference type="Proteomes" id="UP000001258">
    <property type="component" value="Chromosome"/>
</dbReference>
<dbReference type="GO" id="GO:0005829">
    <property type="term" value="C:cytosol"/>
    <property type="evidence" value="ECO:0007669"/>
    <property type="project" value="TreeGrafter"/>
</dbReference>
<dbReference type="GO" id="GO:0005524">
    <property type="term" value="F:ATP binding"/>
    <property type="evidence" value="ECO:0007669"/>
    <property type="project" value="UniProtKB-KW"/>
</dbReference>
<dbReference type="GO" id="GO:0004349">
    <property type="term" value="F:glutamate 5-kinase activity"/>
    <property type="evidence" value="ECO:0007669"/>
    <property type="project" value="UniProtKB-UniRule"/>
</dbReference>
<dbReference type="GO" id="GO:0003723">
    <property type="term" value="F:RNA binding"/>
    <property type="evidence" value="ECO:0007669"/>
    <property type="project" value="InterPro"/>
</dbReference>
<dbReference type="GO" id="GO:0055129">
    <property type="term" value="P:L-proline biosynthetic process"/>
    <property type="evidence" value="ECO:0007669"/>
    <property type="project" value="UniProtKB-UniRule"/>
</dbReference>
<dbReference type="CDD" id="cd04242">
    <property type="entry name" value="AAK_G5K_ProB"/>
    <property type="match status" value="1"/>
</dbReference>
<dbReference type="CDD" id="cd21157">
    <property type="entry name" value="PUA_G5K"/>
    <property type="match status" value="1"/>
</dbReference>
<dbReference type="FunFam" id="3.40.1160.10:FF:000018">
    <property type="entry name" value="Glutamate 5-kinase"/>
    <property type="match status" value="1"/>
</dbReference>
<dbReference type="Gene3D" id="3.40.1160.10">
    <property type="entry name" value="Acetylglutamate kinase-like"/>
    <property type="match status" value="1"/>
</dbReference>
<dbReference type="Gene3D" id="2.30.130.10">
    <property type="entry name" value="PUA domain"/>
    <property type="match status" value="1"/>
</dbReference>
<dbReference type="HAMAP" id="MF_00456">
    <property type="entry name" value="ProB"/>
    <property type="match status" value="1"/>
</dbReference>
<dbReference type="InterPro" id="IPR036393">
    <property type="entry name" value="AceGlu_kinase-like_sf"/>
</dbReference>
<dbReference type="InterPro" id="IPR001048">
    <property type="entry name" value="Asp/Glu/Uridylate_kinase"/>
</dbReference>
<dbReference type="InterPro" id="IPR041739">
    <property type="entry name" value="G5K_ProB"/>
</dbReference>
<dbReference type="InterPro" id="IPR001057">
    <property type="entry name" value="Glu/AcGlu_kinase"/>
</dbReference>
<dbReference type="InterPro" id="IPR011529">
    <property type="entry name" value="Glu_5kinase"/>
</dbReference>
<dbReference type="InterPro" id="IPR005715">
    <property type="entry name" value="Glu_5kinase/COase_Synthase"/>
</dbReference>
<dbReference type="InterPro" id="IPR019797">
    <property type="entry name" value="Glutamate_5-kinase_CS"/>
</dbReference>
<dbReference type="InterPro" id="IPR002478">
    <property type="entry name" value="PUA"/>
</dbReference>
<dbReference type="InterPro" id="IPR015947">
    <property type="entry name" value="PUA-like_sf"/>
</dbReference>
<dbReference type="InterPro" id="IPR036974">
    <property type="entry name" value="PUA_sf"/>
</dbReference>
<dbReference type="NCBIfam" id="TIGR01027">
    <property type="entry name" value="proB"/>
    <property type="match status" value="1"/>
</dbReference>
<dbReference type="PANTHER" id="PTHR43654">
    <property type="entry name" value="GLUTAMATE 5-KINASE"/>
    <property type="match status" value="1"/>
</dbReference>
<dbReference type="PANTHER" id="PTHR43654:SF1">
    <property type="entry name" value="ISOPENTENYL PHOSPHATE KINASE"/>
    <property type="match status" value="1"/>
</dbReference>
<dbReference type="Pfam" id="PF00696">
    <property type="entry name" value="AA_kinase"/>
    <property type="match status" value="1"/>
</dbReference>
<dbReference type="Pfam" id="PF01472">
    <property type="entry name" value="PUA"/>
    <property type="match status" value="1"/>
</dbReference>
<dbReference type="PIRSF" id="PIRSF000729">
    <property type="entry name" value="GK"/>
    <property type="match status" value="1"/>
</dbReference>
<dbReference type="PRINTS" id="PR00474">
    <property type="entry name" value="GLU5KINASE"/>
</dbReference>
<dbReference type="SMART" id="SM00359">
    <property type="entry name" value="PUA"/>
    <property type="match status" value="1"/>
</dbReference>
<dbReference type="SUPFAM" id="SSF53633">
    <property type="entry name" value="Carbamate kinase-like"/>
    <property type="match status" value="1"/>
</dbReference>
<dbReference type="SUPFAM" id="SSF88697">
    <property type="entry name" value="PUA domain-like"/>
    <property type="match status" value="1"/>
</dbReference>
<dbReference type="PROSITE" id="PS00902">
    <property type="entry name" value="GLUTAMATE_5_KINASE"/>
    <property type="match status" value="1"/>
</dbReference>
<dbReference type="PROSITE" id="PS50890">
    <property type="entry name" value="PUA"/>
    <property type="match status" value="1"/>
</dbReference>
<proteinExistence type="inferred from homology"/>